<dbReference type="EMBL" id="AL009126">
    <property type="protein sequence ID" value="CAX52689.1"/>
    <property type="molecule type" value="Genomic_DNA"/>
</dbReference>
<dbReference type="RefSeq" id="WP_003228571.1">
    <property type="nucleotide sequence ID" value="NZ_OZ025638.1"/>
</dbReference>
<dbReference type="RefSeq" id="YP_003097783.1">
    <property type="nucleotide sequence ID" value="NC_000964.3"/>
</dbReference>
<dbReference type="SMR" id="C0H3R0"/>
<dbReference type="STRING" id="224308.BSU32849"/>
<dbReference type="PaxDb" id="224308-BSU32849"/>
<dbReference type="EnsemblBacteria" id="CAX52689">
    <property type="protein sequence ID" value="CAX52689"/>
    <property type="gene ID" value="BSU_32849"/>
</dbReference>
<dbReference type="GeneID" id="8302982"/>
<dbReference type="KEGG" id="bsu:BSU32849"/>
<dbReference type="PATRIC" id="fig|224308.179.peg.3559"/>
<dbReference type="InParanoid" id="C0H3R0"/>
<dbReference type="OrthoDB" id="2931175at2"/>
<dbReference type="BioCyc" id="BSUB:BSU32849-MONOMER"/>
<dbReference type="Proteomes" id="UP000001570">
    <property type="component" value="Chromosome"/>
</dbReference>
<dbReference type="InterPro" id="IPR025625">
    <property type="entry name" value="YuzL"/>
</dbReference>
<dbReference type="Pfam" id="PF14115">
    <property type="entry name" value="YuzL"/>
    <property type="match status" value="1"/>
</dbReference>
<evidence type="ECO:0000256" key="1">
    <source>
        <dbReference type="SAM" id="MobiDB-lite"/>
    </source>
</evidence>
<protein>
    <recommendedName>
        <fullName>Uncharacterized protein YuzL</fullName>
    </recommendedName>
</protein>
<organism>
    <name type="scientific">Bacillus subtilis (strain 168)</name>
    <dbReference type="NCBI Taxonomy" id="224308"/>
    <lineage>
        <taxon>Bacteria</taxon>
        <taxon>Bacillati</taxon>
        <taxon>Bacillota</taxon>
        <taxon>Bacilli</taxon>
        <taxon>Bacillales</taxon>
        <taxon>Bacillaceae</taxon>
        <taxon>Bacillus</taxon>
    </lineage>
</organism>
<name>YUZL_BACSU</name>
<accession>C0H3R0</accession>
<feature type="chain" id="PRO_0000382678" description="Uncharacterized protein YuzL">
    <location>
        <begin position="1"/>
        <end position="48"/>
    </location>
</feature>
<feature type="region of interest" description="Disordered" evidence="1">
    <location>
        <begin position="1"/>
        <end position="48"/>
    </location>
</feature>
<feature type="compositionally biased region" description="Low complexity" evidence="1">
    <location>
        <begin position="9"/>
        <end position="18"/>
    </location>
</feature>
<reference key="1">
    <citation type="journal article" date="1997" name="Nature">
        <title>The complete genome sequence of the Gram-positive bacterium Bacillus subtilis.</title>
        <authorList>
            <person name="Kunst F."/>
            <person name="Ogasawara N."/>
            <person name="Moszer I."/>
            <person name="Albertini A.M."/>
            <person name="Alloni G."/>
            <person name="Azevedo V."/>
            <person name="Bertero M.G."/>
            <person name="Bessieres P."/>
            <person name="Bolotin A."/>
            <person name="Borchert S."/>
            <person name="Borriss R."/>
            <person name="Boursier L."/>
            <person name="Brans A."/>
            <person name="Braun M."/>
            <person name="Brignell S.C."/>
            <person name="Bron S."/>
            <person name="Brouillet S."/>
            <person name="Bruschi C.V."/>
            <person name="Caldwell B."/>
            <person name="Capuano V."/>
            <person name="Carter N.M."/>
            <person name="Choi S.-K."/>
            <person name="Codani J.-J."/>
            <person name="Connerton I.F."/>
            <person name="Cummings N.J."/>
            <person name="Daniel R.A."/>
            <person name="Denizot F."/>
            <person name="Devine K.M."/>
            <person name="Duesterhoeft A."/>
            <person name="Ehrlich S.D."/>
            <person name="Emmerson P.T."/>
            <person name="Entian K.-D."/>
            <person name="Errington J."/>
            <person name="Fabret C."/>
            <person name="Ferrari E."/>
            <person name="Foulger D."/>
            <person name="Fritz C."/>
            <person name="Fujita M."/>
            <person name="Fujita Y."/>
            <person name="Fuma S."/>
            <person name="Galizzi A."/>
            <person name="Galleron N."/>
            <person name="Ghim S.-Y."/>
            <person name="Glaser P."/>
            <person name="Goffeau A."/>
            <person name="Golightly E.J."/>
            <person name="Grandi G."/>
            <person name="Guiseppi G."/>
            <person name="Guy B.J."/>
            <person name="Haga K."/>
            <person name="Haiech J."/>
            <person name="Harwood C.R."/>
            <person name="Henaut A."/>
            <person name="Hilbert H."/>
            <person name="Holsappel S."/>
            <person name="Hosono S."/>
            <person name="Hullo M.-F."/>
            <person name="Itaya M."/>
            <person name="Jones L.-M."/>
            <person name="Joris B."/>
            <person name="Karamata D."/>
            <person name="Kasahara Y."/>
            <person name="Klaerr-Blanchard M."/>
            <person name="Klein C."/>
            <person name="Kobayashi Y."/>
            <person name="Koetter P."/>
            <person name="Koningstein G."/>
            <person name="Krogh S."/>
            <person name="Kumano M."/>
            <person name="Kurita K."/>
            <person name="Lapidus A."/>
            <person name="Lardinois S."/>
            <person name="Lauber J."/>
            <person name="Lazarevic V."/>
            <person name="Lee S.-M."/>
            <person name="Levine A."/>
            <person name="Liu H."/>
            <person name="Masuda S."/>
            <person name="Mauel C."/>
            <person name="Medigue C."/>
            <person name="Medina N."/>
            <person name="Mellado R.P."/>
            <person name="Mizuno M."/>
            <person name="Moestl D."/>
            <person name="Nakai S."/>
            <person name="Noback M."/>
            <person name="Noone D."/>
            <person name="O'Reilly M."/>
            <person name="Ogawa K."/>
            <person name="Ogiwara A."/>
            <person name="Oudega B."/>
            <person name="Park S.-H."/>
            <person name="Parro V."/>
            <person name="Pohl T.M."/>
            <person name="Portetelle D."/>
            <person name="Porwollik S."/>
            <person name="Prescott A.M."/>
            <person name="Presecan E."/>
            <person name="Pujic P."/>
            <person name="Purnelle B."/>
            <person name="Rapoport G."/>
            <person name="Rey M."/>
            <person name="Reynolds S."/>
            <person name="Rieger M."/>
            <person name="Rivolta C."/>
            <person name="Rocha E."/>
            <person name="Roche B."/>
            <person name="Rose M."/>
            <person name="Sadaie Y."/>
            <person name="Sato T."/>
            <person name="Scanlan E."/>
            <person name="Schleich S."/>
            <person name="Schroeter R."/>
            <person name="Scoffone F."/>
            <person name="Sekiguchi J."/>
            <person name="Sekowska A."/>
            <person name="Seror S.J."/>
            <person name="Serror P."/>
            <person name="Shin B.-S."/>
            <person name="Soldo B."/>
            <person name="Sorokin A."/>
            <person name="Tacconi E."/>
            <person name="Takagi T."/>
            <person name="Takahashi H."/>
            <person name="Takemaru K."/>
            <person name="Takeuchi M."/>
            <person name="Tamakoshi A."/>
            <person name="Tanaka T."/>
            <person name="Terpstra P."/>
            <person name="Tognoni A."/>
            <person name="Tosato V."/>
            <person name="Uchiyama S."/>
            <person name="Vandenbol M."/>
            <person name="Vannier F."/>
            <person name="Vassarotti A."/>
            <person name="Viari A."/>
            <person name="Wambutt R."/>
            <person name="Wedler E."/>
            <person name="Wedler H."/>
            <person name="Weitzenegger T."/>
            <person name="Winters P."/>
            <person name="Wipat A."/>
            <person name="Yamamoto H."/>
            <person name="Yamane K."/>
            <person name="Yasumoto K."/>
            <person name="Yata K."/>
            <person name="Yoshida K."/>
            <person name="Yoshikawa H.-F."/>
            <person name="Zumstein E."/>
            <person name="Yoshikawa H."/>
            <person name="Danchin A."/>
        </authorList>
    </citation>
    <scope>NUCLEOTIDE SEQUENCE [LARGE SCALE GENOMIC DNA]</scope>
    <source>
        <strain>168</strain>
    </source>
</reference>
<keyword id="KW-1185">Reference proteome</keyword>
<sequence length="48" mass="5104">MVREKKNPSSAAVSAASVKGDAGPTQHYGGGKRTSQNQQYKKHNMGQS</sequence>
<gene>
    <name type="primary">yuzL</name>
    <name type="ordered locus">BSU32849</name>
</gene>
<proteinExistence type="predicted"/>